<sequence>MLMTRPNLKGRSFLAEKDFTPEELLYFLDLAAELKEKKKNGIPHHYLEGKNVALLFEKTSTRTRCAFTVACTDLGANPEYLGKGDIQLGKKESVEDTAKVLGRMFDGIEFRGFNHETVESLAQNSGVPVWNGLTDMWHPTQTLADLLTIREHVGKLKNVKLVYVGDGRNNVANSLLVGGAIVGMDVRICTPESLWPAQEVIDLAKKYNEQVMITSNVEEAVASADVIYTDVWVSMGEEEKFAERVELLKPYQVNMKMIKETGNKNVIFLHCLPAFHDVETMYGEEVYEKYGLKEMEVTDEVFRSKHSKVFDQAENRMHTIKAVMAATLGNME</sequence>
<reference key="1">
    <citation type="journal article" date="2006" name="J. Bacteriol.">
        <title>Pathogenomic sequence analysis of Bacillus cereus and Bacillus thuringiensis isolates closely related to Bacillus anthracis.</title>
        <authorList>
            <person name="Han C.S."/>
            <person name="Xie G."/>
            <person name="Challacombe J.F."/>
            <person name="Altherr M.R."/>
            <person name="Bhotika S.S."/>
            <person name="Bruce D."/>
            <person name="Campbell C.S."/>
            <person name="Campbell M.L."/>
            <person name="Chen J."/>
            <person name="Chertkov O."/>
            <person name="Cleland C."/>
            <person name="Dimitrijevic M."/>
            <person name="Doggett N.A."/>
            <person name="Fawcett J.J."/>
            <person name="Glavina T."/>
            <person name="Goodwin L.A."/>
            <person name="Hill K.K."/>
            <person name="Hitchcock P."/>
            <person name="Jackson P.J."/>
            <person name="Keim P."/>
            <person name="Kewalramani A.R."/>
            <person name="Longmire J."/>
            <person name="Lucas S."/>
            <person name="Malfatti S."/>
            <person name="McMurry K."/>
            <person name="Meincke L.J."/>
            <person name="Misra M."/>
            <person name="Moseman B.L."/>
            <person name="Mundt M."/>
            <person name="Munk A.C."/>
            <person name="Okinaka R.T."/>
            <person name="Parson-Quintana B."/>
            <person name="Reilly L.P."/>
            <person name="Richardson P."/>
            <person name="Robinson D.L."/>
            <person name="Rubin E."/>
            <person name="Saunders E."/>
            <person name="Tapia R."/>
            <person name="Tesmer J.G."/>
            <person name="Thayer N."/>
            <person name="Thompson L.S."/>
            <person name="Tice H."/>
            <person name="Ticknor L.O."/>
            <person name="Wills P.L."/>
            <person name="Brettin T.S."/>
            <person name="Gilna P."/>
        </authorList>
    </citation>
    <scope>NUCLEOTIDE SEQUENCE [LARGE SCALE GENOMIC DNA]</scope>
    <source>
        <strain>97-27</strain>
    </source>
</reference>
<proteinExistence type="inferred from homology"/>
<keyword id="KW-0056">Arginine metabolism</keyword>
<keyword id="KW-0963">Cytoplasm</keyword>
<keyword id="KW-0808">Transferase</keyword>
<organism>
    <name type="scientific">Bacillus thuringiensis subsp. konkukian (strain 97-27)</name>
    <dbReference type="NCBI Taxonomy" id="281309"/>
    <lineage>
        <taxon>Bacteria</taxon>
        <taxon>Bacillati</taxon>
        <taxon>Bacillota</taxon>
        <taxon>Bacilli</taxon>
        <taxon>Bacillales</taxon>
        <taxon>Bacillaceae</taxon>
        <taxon>Bacillus</taxon>
        <taxon>Bacillus cereus group</taxon>
    </lineage>
</organism>
<comment type="function">
    <text evidence="1">Reversibly catalyzes the transfer of the carbamoyl group from carbamoyl phosphate (CP) to the N(epsilon) atom of ornithine (ORN) to produce L-citrulline.</text>
</comment>
<comment type="catalytic activity">
    <reaction evidence="2">
        <text>carbamoyl phosphate + L-ornithine = L-citrulline + phosphate + H(+)</text>
        <dbReference type="Rhea" id="RHEA:19513"/>
        <dbReference type="ChEBI" id="CHEBI:15378"/>
        <dbReference type="ChEBI" id="CHEBI:43474"/>
        <dbReference type="ChEBI" id="CHEBI:46911"/>
        <dbReference type="ChEBI" id="CHEBI:57743"/>
        <dbReference type="ChEBI" id="CHEBI:58228"/>
        <dbReference type="EC" id="2.1.3.3"/>
    </reaction>
</comment>
<comment type="pathway">
    <text evidence="2">Amino-acid degradation; L-arginine degradation via ADI pathway; carbamoyl phosphate from L-arginine: step 2/2.</text>
</comment>
<comment type="subcellular location">
    <subcellularLocation>
        <location evidence="2">Cytoplasm</location>
    </subcellularLocation>
</comment>
<comment type="similarity">
    <text evidence="2">Belongs to the aspartate/ornithine carbamoyltransferase superfamily. OTCase family.</text>
</comment>
<protein>
    <recommendedName>
        <fullName evidence="2">Ornithine carbamoyltransferase, catabolic</fullName>
        <shortName evidence="2">OTCase</shortName>
        <ecNumber evidence="2">2.1.3.3</ecNumber>
    </recommendedName>
</protein>
<name>OTCC_BACHK</name>
<accession>Q6HP28</accession>
<feature type="chain" id="PRO_0000112883" description="Ornithine carbamoyltransferase, catabolic">
    <location>
        <begin position="1"/>
        <end position="332"/>
    </location>
</feature>
<feature type="binding site" evidence="2">
    <location>
        <begin position="60"/>
        <end position="63"/>
    </location>
    <ligand>
        <name>carbamoyl phosphate</name>
        <dbReference type="ChEBI" id="CHEBI:58228"/>
    </ligand>
</feature>
<feature type="binding site" evidence="2">
    <location>
        <position position="87"/>
    </location>
    <ligand>
        <name>carbamoyl phosphate</name>
        <dbReference type="ChEBI" id="CHEBI:58228"/>
    </ligand>
</feature>
<feature type="binding site" evidence="2">
    <location>
        <position position="111"/>
    </location>
    <ligand>
        <name>carbamoyl phosphate</name>
        <dbReference type="ChEBI" id="CHEBI:58228"/>
    </ligand>
</feature>
<feature type="binding site" evidence="2">
    <location>
        <begin position="138"/>
        <end position="141"/>
    </location>
    <ligand>
        <name>carbamoyl phosphate</name>
        <dbReference type="ChEBI" id="CHEBI:58228"/>
    </ligand>
</feature>
<feature type="binding site" evidence="2">
    <location>
        <position position="170"/>
    </location>
    <ligand>
        <name>L-ornithine</name>
        <dbReference type="ChEBI" id="CHEBI:46911"/>
    </ligand>
</feature>
<feature type="binding site" evidence="2">
    <location>
        <position position="230"/>
    </location>
    <ligand>
        <name>L-ornithine</name>
        <dbReference type="ChEBI" id="CHEBI:46911"/>
    </ligand>
</feature>
<feature type="binding site" evidence="2">
    <location>
        <begin position="234"/>
        <end position="235"/>
    </location>
    <ligand>
        <name>L-ornithine</name>
        <dbReference type="ChEBI" id="CHEBI:46911"/>
    </ligand>
</feature>
<feature type="binding site" evidence="2">
    <location>
        <begin position="271"/>
        <end position="272"/>
    </location>
    <ligand>
        <name>carbamoyl phosphate</name>
        <dbReference type="ChEBI" id="CHEBI:58228"/>
    </ligand>
</feature>
<feature type="binding site" evidence="2">
    <location>
        <position position="316"/>
    </location>
    <ligand>
        <name>carbamoyl phosphate</name>
        <dbReference type="ChEBI" id="CHEBI:58228"/>
    </ligand>
</feature>
<dbReference type="EC" id="2.1.3.3" evidence="2"/>
<dbReference type="EMBL" id="AE017355">
    <property type="protein sequence ID" value="AAT58998.1"/>
    <property type="molecule type" value="Genomic_DNA"/>
</dbReference>
<dbReference type="RefSeq" id="YP_034692.1">
    <property type="nucleotide sequence ID" value="NC_005957.1"/>
</dbReference>
<dbReference type="SMR" id="Q6HP28"/>
<dbReference type="KEGG" id="btk:BT9727_0342"/>
<dbReference type="PATRIC" id="fig|281309.8.peg.364"/>
<dbReference type="HOGENOM" id="CLU_043846_3_1_9"/>
<dbReference type="UniPathway" id="UPA00254">
    <property type="reaction ID" value="UER00365"/>
</dbReference>
<dbReference type="Proteomes" id="UP000001301">
    <property type="component" value="Chromosome"/>
</dbReference>
<dbReference type="GO" id="GO:0005737">
    <property type="term" value="C:cytoplasm"/>
    <property type="evidence" value="ECO:0007669"/>
    <property type="project" value="UniProtKB-SubCell"/>
</dbReference>
<dbReference type="GO" id="GO:0016597">
    <property type="term" value="F:amino acid binding"/>
    <property type="evidence" value="ECO:0007669"/>
    <property type="project" value="InterPro"/>
</dbReference>
<dbReference type="GO" id="GO:0004585">
    <property type="term" value="F:ornithine carbamoyltransferase activity"/>
    <property type="evidence" value="ECO:0007669"/>
    <property type="project" value="UniProtKB-UniRule"/>
</dbReference>
<dbReference type="GO" id="GO:0042450">
    <property type="term" value="P:arginine biosynthetic process via ornithine"/>
    <property type="evidence" value="ECO:0007669"/>
    <property type="project" value="TreeGrafter"/>
</dbReference>
<dbReference type="GO" id="GO:0019547">
    <property type="term" value="P:arginine catabolic process to ornithine"/>
    <property type="evidence" value="ECO:0007669"/>
    <property type="project" value="UniProtKB-UniPathway"/>
</dbReference>
<dbReference type="GO" id="GO:0019240">
    <property type="term" value="P:citrulline biosynthetic process"/>
    <property type="evidence" value="ECO:0007669"/>
    <property type="project" value="TreeGrafter"/>
</dbReference>
<dbReference type="GO" id="GO:0006526">
    <property type="term" value="P:L-arginine biosynthetic process"/>
    <property type="evidence" value="ECO:0007669"/>
    <property type="project" value="UniProtKB-UniRule"/>
</dbReference>
<dbReference type="FunFam" id="3.40.50.1370:FF:000008">
    <property type="entry name" value="Ornithine carbamoyltransferase"/>
    <property type="match status" value="1"/>
</dbReference>
<dbReference type="Gene3D" id="3.40.50.1370">
    <property type="entry name" value="Aspartate/ornithine carbamoyltransferase"/>
    <property type="match status" value="2"/>
</dbReference>
<dbReference type="HAMAP" id="MF_01109">
    <property type="entry name" value="OTCase"/>
    <property type="match status" value="1"/>
</dbReference>
<dbReference type="InterPro" id="IPR006132">
    <property type="entry name" value="Asp/Orn_carbamoyltranf_P-bd"/>
</dbReference>
<dbReference type="InterPro" id="IPR006130">
    <property type="entry name" value="Asp/Orn_carbamoylTrfase"/>
</dbReference>
<dbReference type="InterPro" id="IPR036901">
    <property type="entry name" value="Asp/Orn_carbamoylTrfase_sf"/>
</dbReference>
<dbReference type="InterPro" id="IPR006131">
    <property type="entry name" value="Asp_carbamoyltransf_Asp/Orn-bd"/>
</dbReference>
<dbReference type="InterPro" id="IPR002292">
    <property type="entry name" value="Orn/put_carbamltrans"/>
</dbReference>
<dbReference type="InterPro" id="IPR024904">
    <property type="entry name" value="OTCase_ArgI"/>
</dbReference>
<dbReference type="NCBIfam" id="TIGR00658">
    <property type="entry name" value="orni_carb_tr"/>
    <property type="match status" value="1"/>
</dbReference>
<dbReference type="NCBIfam" id="NF001986">
    <property type="entry name" value="PRK00779.1"/>
    <property type="match status" value="1"/>
</dbReference>
<dbReference type="PANTHER" id="PTHR45753:SF1">
    <property type="entry name" value="ORNITHINE CARBAMOYLTRANSFERASE, CATABOLIC"/>
    <property type="match status" value="1"/>
</dbReference>
<dbReference type="PANTHER" id="PTHR45753">
    <property type="entry name" value="ORNITHINE CARBAMOYLTRANSFERASE, MITOCHONDRIAL"/>
    <property type="match status" value="1"/>
</dbReference>
<dbReference type="Pfam" id="PF00185">
    <property type="entry name" value="OTCace"/>
    <property type="match status" value="1"/>
</dbReference>
<dbReference type="Pfam" id="PF02729">
    <property type="entry name" value="OTCace_N"/>
    <property type="match status" value="1"/>
</dbReference>
<dbReference type="PRINTS" id="PR00100">
    <property type="entry name" value="AOTCASE"/>
</dbReference>
<dbReference type="PRINTS" id="PR00102">
    <property type="entry name" value="OTCASE"/>
</dbReference>
<dbReference type="SUPFAM" id="SSF53671">
    <property type="entry name" value="Aspartate/ornithine carbamoyltransferase"/>
    <property type="match status" value="1"/>
</dbReference>
<dbReference type="PROSITE" id="PS00097">
    <property type="entry name" value="CARBAMOYLTRANSFERASE"/>
    <property type="match status" value="1"/>
</dbReference>
<evidence type="ECO:0000250" key="1"/>
<evidence type="ECO:0000255" key="2">
    <source>
        <dbReference type="HAMAP-Rule" id="MF_01109"/>
    </source>
</evidence>
<gene>
    <name evidence="2" type="primary">arcB</name>
    <name type="ordered locus">BT9727_0342</name>
</gene>